<accession>B4SQS0</accession>
<keyword id="KW-0963">Cytoplasm</keyword>
<keyword id="KW-0342">GTP-binding</keyword>
<keyword id="KW-0396">Initiation factor</keyword>
<keyword id="KW-0547">Nucleotide-binding</keyword>
<keyword id="KW-0648">Protein biosynthesis</keyword>
<organism>
    <name type="scientific">Stenotrophomonas maltophilia (strain R551-3)</name>
    <dbReference type="NCBI Taxonomy" id="391008"/>
    <lineage>
        <taxon>Bacteria</taxon>
        <taxon>Pseudomonadati</taxon>
        <taxon>Pseudomonadota</taxon>
        <taxon>Gammaproteobacteria</taxon>
        <taxon>Lysobacterales</taxon>
        <taxon>Lysobacteraceae</taxon>
        <taxon>Stenotrophomonas</taxon>
        <taxon>Stenotrophomonas maltophilia group</taxon>
    </lineage>
</organism>
<reference key="1">
    <citation type="submission" date="2008-06" db="EMBL/GenBank/DDBJ databases">
        <title>Complete sequence of Stenotrophomonas maltophilia R551-3.</title>
        <authorList>
            <consortium name="US DOE Joint Genome Institute"/>
            <person name="Lucas S."/>
            <person name="Copeland A."/>
            <person name="Lapidus A."/>
            <person name="Glavina del Rio T."/>
            <person name="Dalin E."/>
            <person name="Tice H."/>
            <person name="Pitluck S."/>
            <person name="Chain P."/>
            <person name="Malfatti S."/>
            <person name="Shin M."/>
            <person name="Vergez L."/>
            <person name="Lang D."/>
            <person name="Schmutz J."/>
            <person name="Larimer F."/>
            <person name="Land M."/>
            <person name="Hauser L."/>
            <person name="Kyrpides N."/>
            <person name="Mikhailova N."/>
            <person name="Taghavi S."/>
            <person name="Monchy S."/>
            <person name="Newman L."/>
            <person name="Vangronsveld J."/>
            <person name="van der Lelie D."/>
            <person name="Richardson P."/>
        </authorList>
    </citation>
    <scope>NUCLEOTIDE SEQUENCE [LARGE SCALE GENOMIC DNA]</scope>
    <source>
        <strain>R551-3</strain>
    </source>
</reference>
<feature type="chain" id="PRO_1000093829" description="Translation initiation factor IF-2">
    <location>
        <begin position="1"/>
        <end position="883"/>
    </location>
</feature>
<feature type="domain" description="tr-type G">
    <location>
        <begin position="382"/>
        <end position="551"/>
    </location>
</feature>
<feature type="region of interest" description="Disordered" evidence="3">
    <location>
        <begin position="53"/>
        <end position="90"/>
    </location>
</feature>
<feature type="region of interest" description="Disordered" evidence="3">
    <location>
        <begin position="171"/>
        <end position="294"/>
    </location>
</feature>
<feature type="region of interest" description="G1" evidence="1">
    <location>
        <begin position="391"/>
        <end position="398"/>
    </location>
</feature>
<feature type="region of interest" description="G2" evidence="1">
    <location>
        <begin position="416"/>
        <end position="420"/>
    </location>
</feature>
<feature type="region of interest" description="G3" evidence="1">
    <location>
        <begin position="437"/>
        <end position="440"/>
    </location>
</feature>
<feature type="region of interest" description="G4" evidence="1">
    <location>
        <begin position="491"/>
        <end position="494"/>
    </location>
</feature>
<feature type="region of interest" description="G5" evidence="1">
    <location>
        <begin position="527"/>
        <end position="529"/>
    </location>
</feature>
<feature type="compositionally biased region" description="Polar residues" evidence="3">
    <location>
        <begin position="81"/>
        <end position="90"/>
    </location>
</feature>
<feature type="compositionally biased region" description="Low complexity" evidence="3">
    <location>
        <begin position="172"/>
        <end position="185"/>
    </location>
</feature>
<feature type="compositionally biased region" description="Basic and acidic residues" evidence="3">
    <location>
        <begin position="221"/>
        <end position="238"/>
    </location>
</feature>
<feature type="compositionally biased region" description="Low complexity" evidence="3">
    <location>
        <begin position="256"/>
        <end position="265"/>
    </location>
</feature>
<feature type="binding site" evidence="2">
    <location>
        <begin position="391"/>
        <end position="398"/>
    </location>
    <ligand>
        <name>GTP</name>
        <dbReference type="ChEBI" id="CHEBI:37565"/>
    </ligand>
</feature>
<feature type="binding site" evidence="2">
    <location>
        <begin position="437"/>
        <end position="441"/>
    </location>
    <ligand>
        <name>GTP</name>
        <dbReference type="ChEBI" id="CHEBI:37565"/>
    </ligand>
</feature>
<feature type="binding site" evidence="2">
    <location>
        <begin position="491"/>
        <end position="494"/>
    </location>
    <ligand>
        <name>GTP</name>
        <dbReference type="ChEBI" id="CHEBI:37565"/>
    </ligand>
</feature>
<evidence type="ECO:0000250" key="1"/>
<evidence type="ECO:0000255" key="2">
    <source>
        <dbReference type="HAMAP-Rule" id="MF_00100"/>
    </source>
</evidence>
<evidence type="ECO:0000256" key="3">
    <source>
        <dbReference type="SAM" id="MobiDB-lite"/>
    </source>
</evidence>
<comment type="function">
    <text evidence="2">One of the essential components for the initiation of protein synthesis. Protects formylmethionyl-tRNA from spontaneous hydrolysis and promotes its binding to the 30S ribosomal subunits. Also involved in the hydrolysis of GTP during the formation of the 70S ribosomal complex.</text>
</comment>
<comment type="subcellular location">
    <subcellularLocation>
        <location evidence="2">Cytoplasm</location>
    </subcellularLocation>
</comment>
<comment type="similarity">
    <text evidence="2">Belongs to the TRAFAC class translation factor GTPase superfamily. Classic translation factor GTPase family. IF-2 subfamily.</text>
</comment>
<proteinExistence type="inferred from homology"/>
<dbReference type="EMBL" id="CP001111">
    <property type="protein sequence ID" value="ACF52515.1"/>
    <property type="molecule type" value="Genomic_DNA"/>
</dbReference>
<dbReference type="RefSeq" id="WP_012511703.1">
    <property type="nucleotide sequence ID" value="NC_011071.1"/>
</dbReference>
<dbReference type="SMR" id="B4SQS0"/>
<dbReference type="STRING" id="391008.Smal_2815"/>
<dbReference type="KEGG" id="smt:Smal_2815"/>
<dbReference type="eggNOG" id="COG0532">
    <property type="taxonomic scope" value="Bacteria"/>
</dbReference>
<dbReference type="HOGENOM" id="CLU_006301_10_2_6"/>
<dbReference type="OrthoDB" id="9811804at2"/>
<dbReference type="Proteomes" id="UP000001867">
    <property type="component" value="Chromosome"/>
</dbReference>
<dbReference type="GO" id="GO:0005829">
    <property type="term" value="C:cytosol"/>
    <property type="evidence" value="ECO:0007669"/>
    <property type="project" value="TreeGrafter"/>
</dbReference>
<dbReference type="GO" id="GO:0005525">
    <property type="term" value="F:GTP binding"/>
    <property type="evidence" value="ECO:0007669"/>
    <property type="project" value="UniProtKB-KW"/>
</dbReference>
<dbReference type="GO" id="GO:0003924">
    <property type="term" value="F:GTPase activity"/>
    <property type="evidence" value="ECO:0007669"/>
    <property type="project" value="UniProtKB-UniRule"/>
</dbReference>
<dbReference type="GO" id="GO:0097216">
    <property type="term" value="F:guanosine tetraphosphate binding"/>
    <property type="evidence" value="ECO:0007669"/>
    <property type="project" value="UniProtKB-ARBA"/>
</dbReference>
<dbReference type="GO" id="GO:0003743">
    <property type="term" value="F:translation initiation factor activity"/>
    <property type="evidence" value="ECO:0007669"/>
    <property type="project" value="UniProtKB-UniRule"/>
</dbReference>
<dbReference type="CDD" id="cd01887">
    <property type="entry name" value="IF2_eIF5B"/>
    <property type="match status" value="1"/>
</dbReference>
<dbReference type="CDD" id="cd03702">
    <property type="entry name" value="IF2_mtIF2_II"/>
    <property type="match status" value="1"/>
</dbReference>
<dbReference type="CDD" id="cd03692">
    <property type="entry name" value="mtIF2_IVc"/>
    <property type="match status" value="1"/>
</dbReference>
<dbReference type="FunFam" id="2.40.30.10:FF:000008">
    <property type="entry name" value="Translation initiation factor IF-2"/>
    <property type="match status" value="1"/>
</dbReference>
<dbReference type="FunFam" id="2.40.30.10:FF:000054">
    <property type="entry name" value="Translation initiation factor IF-2"/>
    <property type="match status" value="1"/>
</dbReference>
<dbReference type="FunFam" id="3.40.50.10050:FF:000001">
    <property type="entry name" value="Translation initiation factor IF-2"/>
    <property type="match status" value="1"/>
</dbReference>
<dbReference type="FunFam" id="3.40.50.300:FF:000019">
    <property type="entry name" value="Translation initiation factor IF-2"/>
    <property type="match status" value="1"/>
</dbReference>
<dbReference type="Gene3D" id="3.40.50.300">
    <property type="entry name" value="P-loop containing nucleotide triphosphate hydrolases"/>
    <property type="match status" value="1"/>
</dbReference>
<dbReference type="Gene3D" id="3.30.56.50">
    <property type="entry name" value="Putative DNA-binding domain, N-terminal subdomain of bacterial translation initiation factor IF2"/>
    <property type="match status" value="1"/>
</dbReference>
<dbReference type="Gene3D" id="2.40.30.10">
    <property type="entry name" value="Translation factors"/>
    <property type="match status" value="2"/>
</dbReference>
<dbReference type="Gene3D" id="3.40.50.10050">
    <property type="entry name" value="Translation initiation factor IF- 2, domain 3"/>
    <property type="match status" value="1"/>
</dbReference>
<dbReference type="HAMAP" id="MF_00100_B">
    <property type="entry name" value="IF_2_B"/>
    <property type="match status" value="1"/>
</dbReference>
<dbReference type="InterPro" id="IPR009061">
    <property type="entry name" value="DNA-bd_dom_put_sf"/>
</dbReference>
<dbReference type="InterPro" id="IPR053905">
    <property type="entry name" value="EF-G-like_DII"/>
</dbReference>
<dbReference type="InterPro" id="IPR004161">
    <property type="entry name" value="EFTu-like_2"/>
</dbReference>
<dbReference type="InterPro" id="IPR013575">
    <property type="entry name" value="IF2_assoc_dom_bac"/>
</dbReference>
<dbReference type="InterPro" id="IPR044145">
    <property type="entry name" value="IF2_II"/>
</dbReference>
<dbReference type="InterPro" id="IPR006847">
    <property type="entry name" value="IF2_N"/>
</dbReference>
<dbReference type="InterPro" id="IPR027417">
    <property type="entry name" value="P-loop_NTPase"/>
</dbReference>
<dbReference type="InterPro" id="IPR005225">
    <property type="entry name" value="Small_GTP-bd"/>
</dbReference>
<dbReference type="InterPro" id="IPR000795">
    <property type="entry name" value="T_Tr_GTP-bd_dom"/>
</dbReference>
<dbReference type="InterPro" id="IPR000178">
    <property type="entry name" value="TF_IF2_bacterial-like"/>
</dbReference>
<dbReference type="InterPro" id="IPR015760">
    <property type="entry name" value="TIF_IF2"/>
</dbReference>
<dbReference type="InterPro" id="IPR023115">
    <property type="entry name" value="TIF_IF2_dom3"/>
</dbReference>
<dbReference type="InterPro" id="IPR036925">
    <property type="entry name" value="TIF_IF2_dom3_sf"/>
</dbReference>
<dbReference type="InterPro" id="IPR009000">
    <property type="entry name" value="Transl_B-barrel_sf"/>
</dbReference>
<dbReference type="NCBIfam" id="TIGR00487">
    <property type="entry name" value="IF-2"/>
    <property type="match status" value="1"/>
</dbReference>
<dbReference type="NCBIfam" id="TIGR00231">
    <property type="entry name" value="small_GTP"/>
    <property type="match status" value="1"/>
</dbReference>
<dbReference type="PANTHER" id="PTHR43381:SF5">
    <property type="entry name" value="TR-TYPE G DOMAIN-CONTAINING PROTEIN"/>
    <property type="match status" value="1"/>
</dbReference>
<dbReference type="PANTHER" id="PTHR43381">
    <property type="entry name" value="TRANSLATION INITIATION FACTOR IF-2-RELATED"/>
    <property type="match status" value="1"/>
</dbReference>
<dbReference type="Pfam" id="PF22042">
    <property type="entry name" value="EF-G_D2"/>
    <property type="match status" value="1"/>
</dbReference>
<dbReference type="Pfam" id="PF00009">
    <property type="entry name" value="GTP_EFTU"/>
    <property type="match status" value="1"/>
</dbReference>
<dbReference type="Pfam" id="PF03144">
    <property type="entry name" value="GTP_EFTU_D2"/>
    <property type="match status" value="1"/>
</dbReference>
<dbReference type="Pfam" id="PF11987">
    <property type="entry name" value="IF-2"/>
    <property type="match status" value="1"/>
</dbReference>
<dbReference type="Pfam" id="PF08364">
    <property type="entry name" value="IF2_assoc"/>
    <property type="match status" value="1"/>
</dbReference>
<dbReference type="Pfam" id="PF04760">
    <property type="entry name" value="IF2_N"/>
    <property type="match status" value="1"/>
</dbReference>
<dbReference type="SUPFAM" id="SSF52156">
    <property type="entry name" value="Initiation factor IF2/eIF5b, domain 3"/>
    <property type="match status" value="1"/>
</dbReference>
<dbReference type="SUPFAM" id="SSF52540">
    <property type="entry name" value="P-loop containing nucleoside triphosphate hydrolases"/>
    <property type="match status" value="1"/>
</dbReference>
<dbReference type="SUPFAM" id="SSF46955">
    <property type="entry name" value="Putative DNA-binding domain"/>
    <property type="match status" value="1"/>
</dbReference>
<dbReference type="SUPFAM" id="SSF50447">
    <property type="entry name" value="Translation proteins"/>
    <property type="match status" value="2"/>
</dbReference>
<dbReference type="PROSITE" id="PS51722">
    <property type="entry name" value="G_TR_2"/>
    <property type="match status" value="1"/>
</dbReference>
<dbReference type="PROSITE" id="PS01176">
    <property type="entry name" value="IF2"/>
    <property type="match status" value="1"/>
</dbReference>
<protein>
    <recommendedName>
        <fullName evidence="2">Translation initiation factor IF-2</fullName>
    </recommendedName>
</protein>
<name>IF2_STRM5</name>
<sequence>MSQQTTIRKLAELVNTPVEKLLEQLAGAGMKFSGPDQVVTSSEKVKLLGFLRRSHGKPEQAPEETDQSAKKITLNRRKQQEVTVNSGRSKTTVNVEVRQKRTYVKDGARAMTPDEERADILRKLEESRARNLAEQQALAEKDRLRDEAIVRAREEEVAAKERAEAEKKAAEEAAAAAKAAEALAASKPKVRAPIDETAPRPPRAPAAAPAAPRGAPPPPPRSDDRNNRSAPRNERGPGDRFAGQMHLSAADRARRGNSNNSNNRGRPGGRNQSGGRRDMSRGGNNAGPHAFERPTAPVVREVAIGETITVADLAQKLALKGGEVVKALFKMGVMATITQSIDHDTAALVTEELGHKAIRANDNDAEDALLASAGENQGEAVQRPPVVTIMGHVDHGKTSLLDYIRRTKVATGEAGGITQHIGAYHVDTPKGVISFLDTPGHAAFTSMRARGAKLTDIVVLVVAADDGVMPQTKEAIQHARSAGVPLIVAINKIDKSGADPMRVKNELLSEQVVAEDFGGDIQMVEISAKTGLGIDDLLDAVSVQAELLELKAVDEGRANGVVIESSLDKGRGPVATVLVQQGRLKKGDYLVCGIQYGRVRALFDETGKQPEFAGPSIPVQVLGLSGVPEAGDDFVVVDDERLAKDVAQQRETKRRESRLVATAGSRMEDIMATLGKGEGQQVLNLVIKADVQGSVQALSQALVALSNEDIRINVIHSGVGGITESDANSAAASKATVIGFNVRADASARRIIESNGVDLRYFSIIYDVIDQVKQVASGLLGVEIREEIIGIAEVRDVFRSSKLGAVAGSMVIEGVVKRNKPIRVLRDSVVIFEGELESLRRFKENVEEVRNGTECGIAVKAYNDVKPGDQIECFERIEVPRTL</sequence>
<gene>
    <name evidence="2" type="primary">infB</name>
    <name type="ordered locus">Smal_2815</name>
</gene>